<name>TIM10_CAEEL</name>
<feature type="chain" id="PRO_0000228059" description="Mitochondrial import inner membrane translocase subunit Tim10">
    <location>
        <begin position="1"/>
        <end position="86"/>
    </location>
</feature>
<feature type="short sequence motif" description="Twin CX3C motif">
    <location>
        <begin position="29"/>
        <end position="54"/>
    </location>
</feature>
<feature type="disulfide bond" evidence="1">
    <location>
        <begin position="29"/>
        <end position="54"/>
    </location>
</feature>
<feature type="disulfide bond" evidence="1">
    <location>
        <begin position="33"/>
        <end position="50"/>
    </location>
</feature>
<keyword id="KW-0143">Chaperone</keyword>
<keyword id="KW-1015">Disulfide bond</keyword>
<keyword id="KW-0472">Membrane</keyword>
<keyword id="KW-0479">Metal-binding</keyword>
<keyword id="KW-0496">Mitochondrion</keyword>
<keyword id="KW-0999">Mitochondrion inner membrane</keyword>
<keyword id="KW-0653">Protein transport</keyword>
<keyword id="KW-1185">Reference proteome</keyword>
<keyword id="KW-0811">Translocation</keyword>
<keyword id="KW-0813">Transport</keyword>
<keyword id="KW-0862">Zinc</keyword>
<sequence>MATDAQMAQVAELEVEMMSDMYRRMTNSCQAKCIATAFRESELTKGEAVCLDRCVAKYLDVHEKLGKRLTSMSQGDEAALQKIAQQ</sequence>
<evidence type="ECO:0000250" key="1"/>
<evidence type="ECO:0000269" key="2">
    <source>
    </source>
</evidence>
<evidence type="ECO:0000305" key="3"/>
<evidence type="ECO:0000305" key="4">
    <source>
    </source>
</evidence>
<reference key="1">
    <citation type="journal article" date="1999" name="FEBS Lett.">
        <title>The mitochondrial TIM22 preprotein translocase is highly conserved throughout the eukaryotic kingdom.</title>
        <authorList>
            <person name="Bauer M.F."/>
            <person name="Rothbauer U."/>
            <person name="Muehlenbein N."/>
            <person name="Smith R.J.H."/>
            <person name="Gerbitz K.-D."/>
            <person name="Neupert W."/>
            <person name="Brunner M."/>
            <person name="Hofmann S."/>
        </authorList>
    </citation>
    <scope>NUCLEOTIDE SEQUENCE [MRNA]</scope>
</reference>
<reference key="2">
    <citation type="journal article" date="1998" name="Science">
        <title>Genome sequence of the nematode C. elegans: a platform for investigating biology.</title>
        <authorList>
            <consortium name="The C. elegans sequencing consortium"/>
        </authorList>
    </citation>
    <scope>NUCLEOTIDE SEQUENCE [LARGE SCALE GENOMIC DNA]</scope>
    <source>
        <strain>Bristol N2</strain>
    </source>
</reference>
<reference key="3">
    <citation type="journal article" date="2004" name="J. Biol. Chem.">
        <title>Defective mitochondrial protein translocation precludes normal Caenorhabditis elegans development.</title>
        <authorList>
            <person name="Curran S.P."/>
            <person name="Leverich E.P."/>
            <person name="Koehler C.M."/>
            <person name="Larsen P.L."/>
        </authorList>
    </citation>
    <scope>FUNCTION</scope>
    <scope>DISRUPTION PHENOTYPE</scope>
</reference>
<accession>Q9Y0V6</accession>
<protein>
    <recommendedName>
        <fullName>Mitochondrial import inner membrane translocase subunit Tim10</fullName>
    </recommendedName>
</protein>
<proteinExistence type="inferred from homology"/>
<organism>
    <name type="scientific">Caenorhabditis elegans</name>
    <dbReference type="NCBI Taxonomy" id="6239"/>
    <lineage>
        <taxon>Eukaryota</taxon>
        <taxon>Metazoa</taxon>
        <taxon>Ecdysozoa</taxon>
        <taxon>Nematoda</taxon>
        <taxon>Chromadorea</taxon>
        <taxon>Rhabditida</taxon>
        <taxon>Rhabditina</taxon>
        <taxon>Rhabditomorpha</taxon>
        <taxon>Rhabditoidea</taxon>
        <taxon>Rhabditidae</taxon>
        <taxon>Peloderinae</taxon>
        <taxon>Caenorhabditis</taxon>
    </lineage>
</organism>
<comment type="function">
    <text evidence="4">Mitochondrial intermembrane chaperone that participates in the import and insertion of multi-pass transmembrane proteins into the mitochondrial inner membrane. May also be required for the transfer of beta-barrel precursors from the TOM complex to the sorting and assembly machinery (SAM complex) of the outer membrane. Acts as a chaperone-like protein that protects the hydrophobic precursors from aggregation and guide them through the mitochondrial intermembrane space (Probable).</text>
</comment>
<comment type="subunit">
    <text evidence="1">Heterohexamer; composed of 3 copies of tim-9/tin-9.1 and 3 copies of tim-10/tin-10, named soluble 70 kDa complex. The complex associates with the tim-22 component of the TIM22 complex. Interacts with multi-pass transmembrane proteins in transit (By similarity).</text>
</comment>
<comment type="subcellular location">
    <subcellularLocation>
        <location evidence="1">Mitochondrion inner membrane</location>
        <topology evidence="1">Peripheral membrane protein</topology>
        <orientation evidence="1">Intermembrane side</orientation>
    </subcellularLocation>
</comment>
<comment type="domain">
    <text evidence="1">The twin CX3C motif contains 4 conserved Cys residues that form 2 disulfide bonds in the mitochondrial intermembrane space. However, during the transit of tim-10/tin-10 from cytoplasm into mitochondrion, the Cys residues probably coordinate zinc, thereby preventing folding and allowing its transfer across mitochondrial outer membrane (By similarity).</text>
</comment>
<comment type="disruption phenotype">
    <text evidence="2">Worms a small body size, reduced number of progeny produced and partial embryonic lethality due to defects in import of proteins into mitochondria.</text>
</comment>
<comment type="similarity">
    <text evidence="3">Belongs to the small Tim family.</text>
</comment>
<gene>
    <name type="primary">tin-10</name>
    <name type="synonym">tim-10</name>
    <name type="ORF">Y66D12A.22</name>
</gene>
<dbReference type="EMBL" id="AF150094">
    <property type="protein sequence ID" value="AAD40000.1"/>
    <property type="molecule type" value="mRNA"/>
</dbReference>
<dbReference type="EMBL" id="AL161712">
    <property type="protein sequence ID" value="CAC70139.1"/>
    <property type="molecule type" value="Genomic_DNA"/>
</dbReference>
<dbReference type="RefSeq" id="NP_001370128.1">
    <property type="nucleotide sequence ID" value="NM_001382999.2"/>
</dbReference>
<dbReference type="RefSeq" id="NP_499480.1">
    <property type="nucleotide sequence ID" value="NM_067079.5"/>
</dbReference>
<dbReference type="SMR" id="Q9Y0V6"/>
<dbReference type="BioGRID" id="41761">
    <property type="interactions" value="2"/>
</dbReference>
<dbReference type="FunCoup" id="Q9Y0V6">
    <property type="interactions" value="1923"/>
</dbReference>
<dbReference type="STRING" id="6239.Y66D12A.22.1"/>
<dbReference type="PaxDb" id="6239-Y66D12A.22.1"/>
<dbReference type="PeptideAtlas" id="Q9Y0V6"/>
<dbReference type="EnsemblMetazoa" id="Y66D12A.22.1">
    <property type="protein sequence ID" value="Y66D12A.22.1"/>
    <property type="gene ID" value="WBGene00006573"/>
</dbReference>
<dbReference type="EnsemblMetazoa" id="Y66D12A.22.2">
    <property type="protein sequence ID" value="Y66D12A.22.2"/>
    <property type="gene ID" value="WBGene00006573"/>
</dbReference>
<dbReference type="EnsemblMetazoa" id="Y66D12A.22.3">
    <property type="protein sequence ID" value="Y66D12A.22.3"/>
    <property type="gene ID" value="WBGene00006573"/>
</dbReference>
<dbReference type="GeneID" id="176580"/>
<dbReference type="UCSC" id="Y66D12A.22.2">
    <property type="organism name" value="c. elegans"/>
</dbReference>
<dbReference type="AGR" id="WB:WBGene00006573"/>
<dbReference type="WormBase" id="Y66D12A.22">
    <property type="protein sequence ID" value="CE28800"/>
    <property type="gene ID" value="WBGene00006573"/>
    <property type="gene designation" value="tin-10"/>
</dbReference>
<dbReference type="eggNOG" id="KOG3480">
    <property type="taxonomic scope" value="Eukaryota"/>
</dbReference>
<dbReference type="GeneTree" id="ENSGT00390000003068"/>
<dbReference type="HOGENOM" id="CLU_162151_2_0_1"/>
<dbReference type="InParanoid" id="Q9Y0V6"/>
<dbReference type="OMA" id="VGENMQK"/>
<dbReference type="OrthoDB" id="274922at2759"/>
<dbReference type="PhylomeDB" id="Q9Y0V6"/>
<dbReference type="PRO" id="PR:Q9Y0V6"/>
<dbReference type="Proteomes" id="UP000001940">
    <property type="component" value="Chromosome III"/>
</dbReference>
<dbReference type="Bgee" id="WBGene00006573">
    <property type="expression patterns" value="Expressed in germ line (C elegans) and 4 other cell types or tissues"/>
</dbReference>
<dbReference type="GO" id="GO:0005743">
    <property type="term" value="C:mitochondrial inner membrane"/>
    <property type="evidence" value="ECO:0000318"/>
    <property type="project" value="GO_Central"/>
</dbReference>
<dbReference type="GO" id="GO:0046872">
    <property type="term" value="F:metal ion binding"/>
    <property type="evidence" value="ECO:0007669"/>
    <property type="project" value="UniProtKB-KW"/>
</dbReference>
<dbReference type="GO" id="GO:0045039">
    <property type="term" value="P:protein insertion into mitochondrial inner membrane"/>
    <property type="evidence" value="ECO:0000315"/>
    <property type="project" value="WormBase"/>
</dbReference>
<dbReference type="GO" id="GO:0040014">
    <property type="term" value="P:regulation of multicellular organism growth"/>
    <property type="evidence" value="ECO:0000315"/>
    <property type="project" value="WormBase"/>
</dbReference>
<dbReference type="FunFam" id="1.10.287.810:FF:000002">
    <property type="entry name" value="Mitochondrial import inner membrane translocase subunit tim10"/>
    <property type="match status" value="1"/>
</dbReference>
<dbReference type="Gene3D" id="1.10.287.810">
    <property type="entry name" value="Mitochondrial import inner membrane translocase subunit tim13 like domains"/>
    <property type="match status" value="1"/>
</dbReference>
<dbReference type="InterPro" id="IPR004217">
    <property type="entry name" value="Tim10-like"/>
</dbReference>
<dbReference type="InterPro" id="IPR035427">
    <property type="entry name" value="Tim10-like_dom_sf"/>
</dbReference>
<dbReference type="PANTHER" id="PTHR11038">
    <property type="entry name" value="MITOCHONDRIAL IMPORT INNER MEMBRANE TRANSLOCASE SUBUNIT TIM10"/>
    <property type="match status" value="1"/>
</dbReference>
<dbReference type="PANTHER" id="PTHR11038:SF16">
    <property type="entry name" value="MITOCHONDRIAL IMPORT INNER MEMBRANE TRANSLOCASE SUBUNIT TIM10"/>
    <property type="match status" value="1"/>
</dbReference>
<dbReference type="Pfam" id="PF02953">
    <property type="entry name" value="zf-Tim10_DDP"/>
    <property type="match status" value="1"/>
</dbReference>
<dbReference type="SUPFAM" id="SSF144122">
    <property type="entry name" value="Tim10-like"/>
    <property type="match status" value="1"/>
</dbReference>